<sequence>MPKSKVRKKNDFTVSAVSRTPMKVKVGPSSVWFVSLFIGLMLIGLIWLMVFQLAAIGSQAPTALNWMAQLGPWNYAIAFAFMITGLLLTMRWH</sequence>
<proteinExistence type="inferred from homology"/>
<dbReference type="EMBL" id="CP000611">
    <property type="protein sequence ID" value="ABQ71731.1"/>
    <property type="molecule type" value="Genomic_DNA"/>
</dbReference>
<dbReference type="RefSeq" id="WP_003400344.1">
    <property type="nucleotide sequence ID" value="NZ_CP016972.1"/>
</dbReference>
<dbReference type="BMRB" id="A5TY81"/>
<dbReference type="SMR" id="A5TY81"/>
<dbReference type="GeneID" id="45423970"/>
<dbReference type="KEGG" id="mra:MRA_0013"/>
<dbReference type="eggNOG" id="ENOG5031Y35">
    <property type="taxonomic scope" value="Bacteria"/>
</dbReference>
<dbReference type="HOGENOM" id="CLU_149126_2_0_11"/>
<dbReference type="Proteomes" id="UP000001988">
    <property type="component" value="Chromosome"/>
</dbReference>
<dbReference type="GO" id="GO:0005886">
    <property type="term" value="C:plasma membrane"/>
    <property type="evidence" value="ECO:0007669"/>
    <property type="project" value="UniProtKB-SubCell"/>
</dbReference>
<dbReference type="GO" id="GO:0051301">
    <property type="term" value="P:cell division"/>
    <property type="evidence" value="ECO:0007669"/>
    <property type="project" value="UniProtKB-UniRule"/>
</dbReference>
<dbReference type="HAMAP" id="MF_00631">
    <property type="entry name" value="CrgA"/>
    <property type="match status" value="1"/>
</dbReference>
<dbReference type="InterPro" id="IPR009619">
    <property type="entry name" value="CrgA"/>
</dbReference>
<dbReference type="NCBIfam" id="NF001194">
    <property type="entry name" value="PRK00159.1"/>
    <property type="match status" value="1"/>
</dbReference>
<dbReference type="Pfam" id="PF06781">
    <property type="entry name" value="CrgA"/>
    <property type="match status" value="1"/>
</dbReference>
<comment type="function">
    <text evidence="1">Involved in cell division.</text>
</comment>
<comment type="subcellular location">
    <subcellularLocation>
        <location evidence="1">Cell membrane</location>
        <topology evidence="1">Multi-pass membrane protein</topology>
    </subcellularLocation>
</comment>
<comment type="similarity">
    <text evidence="1">Belongs to the CrgA family.</text>
</comment>
<organism>
    <name type="scientific">Mycobacterium tuberculosis (strain ATCC 25177 / H37Ra)</name>
    <dbReference type="NCBI Taxonomy" id="419947"/>
    <lineage>
        <taxon>Bacteria</taxon>
        <taxon>Bacillati</taxon>
        <taxon>Actinomycetota</taxon>
        <taxon>Actinomycetes</taxon>
        <taxon>Mycobacteriales</taxon>
        <taxon>Mycobacteriaceae</taxon>
        <taxon>Mycobacterium</taxon>
        <taxon>Mycobacterium tuberculosis complex</taxon>
    </lineage>
</organism>
<gene>
    <name evidence="1" type="primary">crgA</name>
    <name type="ordered locus">MRA_0013</name>
</gene>
<reference key="1">
    <citation type="journal article" date="2008" name="PLoS ONE">
        <title>Genetic basis of virulence attenuation revealed by comparative genomic analysis of Mycobacterium tuberculosis strain H37Ra versus H37Rv.</title>
        <authorList>
            <person name="Zheng H."/>
            <person name="Lu L."/>
            <person name="Wang B."/>
            <person name="Pu S."/>
            <person name="Zhang X."/>
            <person name="Zhu G."/>
            <person name="Shi W."/>
            <person name="Zhang L."/>
            <person name="Wang H."/>
            <person name="Wang S."/>
            <person name="Zhao G."/>
            <person name="Zhang Y."/>
        </authorList>
    </citation>
    <scope>NUCLEOTIDE SEQUENCE [LARGE SCALE GENOMIC DNA]</scope>
    <source>
        <strain>ATCC 25177 / H37Ra</strain>
    </source>
</reference>
<name>CRGA_MYCTA</name>
<evidence type="ECO:0000255" key="1">
    <source>
        <dbReference type="HAMAP-Rule" id="MF_00631"/>
    </source>
</evidence>
<feature type="chain" id="PRO_1000051707" description="Cell division protein CrgA">
    <location>
        <begin position="1"/>
        <end position="93"/>
    </location>
</feature>
<feature type="transmembrane region" description="Helical" evidence="1">
    <location>
        <begin position="31"/>
        <end position="51"/>
    </location>
</feature>
<feature type="transmembrane region" description="Helical" evidence="1">
    <location>
        <begin position="70"/>
        <end position="90"/>
    </location>
</feature>
<protein>
    <recommendedName>
        <fullName evidence="1">Cell division protein CrgA</fullName>
    </recommendedName>
</protein>
<keyword id="KW-0131">Cell cycle</keyword>
<keyword id="KW-0132">Cell division</keyword>
<keyword id="KW-1003">Cell membrane</keyword>
<keyword id="KW-0472">Membrane</keyword>
<keyword id="KW-1185">Reference proteome</keyword>
<keyword id="KW-0812">Transmembrane</keyword>
<keyword id="KW-1133">Transmembrane helix</keyword>
<accession>A5TY81</accession>